<keyword id="KW-0961">Cell wall biogenesis/degradation</keyword>
<keyword id="KW-0963">Cytoplasm</keyword>
<keyword id="KW-0596">Phosphopantetheine</keyword>
<keyword id="KW-0597">Phosphoprotein</keyword>
<organism>
    <name type="scientific">Lactococcus lactis subsp. cremoris (strain MG1363)</name>
    <dbReference type="NCBI Taxonomy" id="416870"/>
    <lineage>
        <taxon>Bacteria</taxon>
        <taxon>Bacillati</taxon>
        <taxon>Bacillota</taxon>
        <taxon>Bacilli</taxon>
        <taxon>Lactobacillales</taxon>
        <taxon>Streptococcaceae</taxon>
        <taxon>Lactococcus</taxon>
        <taxon>Lactococcus cremoris subsp. cremoris</taxon>
    </lineage>
</organism>
<accession>A2RKK0</accession>
<name>DLTC_LACLM</name>
<dbReference type="EMBL" id="AM406671">
    <property type="protein sequence ID" value="CAL97812.1"/>
    <property type="molecule type" value="Genomic_DNA"/>
</dbReference>
<dbReference type="RefSeq" id="WP_011676184.1">
    <property type="nucleotide sequence ID" value="NC_009004.1"/>
</dbReference>
<dbReference type="SMR" id="A2RKK0"/>
<dbReference type="STRING" id="416870.llmg_1221"/>
<dbReference type="GeneID" id="61109507"/>
<dbReference type="KEGG" id="llm:llmg_1221"/>
<dbReference type="eggNOG" id="COG0236">
    <property type="taxonomic scope" value="Bacteria"/>
</dbReference>
<dbReference type="HOGENOM" id="CLU_108696_19_0_9"/>
<dbReference type="OrthoDB" id="6462171at2"/>
<dbReference type="PhylomeDB" id="A2RKK0"/>
<dbReference type="UniPathway" id="UPA00556"/>
<dbReference type="Proteomes" id="UP000000364">
    <property type="component" value="Chromosome"/>
</dbReference>
<dbReference type="GO" id="GO:0005737">
    <property type="term" value="C:cytoplasm"/>
    <property type="evidence" value="ECO:0007669"/>
    <property type="project" value="UniProtKB-SubCell"/>
</dbReference>
<dbReference type="GO" id="GO:0036370">
    <property type="term" value="F:D-alanyl carrier activity"/>
    <property type="evidence" value="ECO:0007669"/>
    <property type="project" value="UniProtKB-UniRule"/>
</dbReference>
<dbReference type="GO" id="GO:0071555">
    <property type="term" value="P:cell wall organization"/>
    <property type="evidence" value="ECO:0007669"/>
    <property type="project" value="UniProtKB-KW"/>
</dbReference>
<dbReference type="GO" id="GO:0070395">
    <property type="term" value="P:lipoteichoic acid biosynthetic process"/>
    <property type="evidence" value="ECO:0007669"/>
    <property type="project" value="UniProtKB-UniRule"/>
</dbReference>
<dbReference type="Gene3D" id="1.10.1200.10">
    <property type="entry name" value="ACP-like"/>
    <property type="match status" value="1"/>
</dbReference>
<dbReference type="HAMAP" id="MF_00565">
    <property type="entry name" value="DltC"/>
    <property type="match status" value="1"/>
</dbReference>
<dbReference type="InterPro" id="IPR036736">
    <property type="entry name" value="ACP-like_sf"/>
</dbReference>
<dbReference type="InterPro" id="IPR003230">
    <property type="entry name" value="DltC"/>
</dbReference>
<dbReference type="InterPro" id="IPR009081">
    <property type="entry name" value="PP-bd_ACP"/>
</dbReference>
<dbReference type="NCBIfam" id="TIGR01688">
    <property type="entry name" value="dltC"/>
    <property type="match status" value="1"/>
</dbReference>
<dbReference type="NCBIfam" id="NF003464">
    <property type="entry name" value="PRK05087.1"/>
    <property type="match status" value="1"/>
</dbReference>
<dbReference type="Pfam" id="PF00550">
    <property type="entry name" value="PP-binding"/>
    <property type="match status" value="1"/>
</dbReference>
<dbReference type="SUPFAM" id="SSF47336">
    <property type="entry name" value="ACP-like"/>
    <property type="match status" value="1"/>
</dbReference>
<dbReference type="PROSITE" id="PS50075">
    <property type="entry name" value="CARRIER"/>
    <property type="match status" value="1"/>
</dbReference>
<feature type="chain" id="PRO_1000024918" description="D-alanyl carrier protein">
    <location>
        <begin position="1"/>
        <end position="79"/>
    </location>
</feature>
<feature type="domain" description="Carrier" evidence="1">
    <location>
        <begin position="1"/>
        <end position="76"/>
    </location>
</feature>
<feature type="modified residue" description="O-(pantetheine 4'-phosphoryl)serine" evidence="1">
    <location>
        <position position="34"/>
    </location>
</feature>
<evidence type="ECO:0000255" key="1">
    <source>
        <dbReference type="HAMAP-Rule" id="MF_00565"/>
    </source>
</evidence>
<protein>
    <recommendedName>
        <fullName evidence="1">D-alanyl carrier protein</fullName>
        <shortName evidence="1">DCP</shortName>
    </recommendedName>
    <alternativeName>
        <fullName evidence="1">D-alanine--poly(phosphoribitol) ligase subunit 2</fullName>
    </alternativeName>
</protein>
<reference key="1">
    <citation type="journal article" date="2007" name="J. Bacteriol.">
        <title>The complete genome sequence of the lactic acid bacterial paradigm Lactococcus lactis subsp. cremoris MG1363.</title>
        <authorList>
            <person name="Wegmann U."/>
            <person name="O'Connell-Motherway M."/>
            <person name="Zomer A."/>
            <person name="Buist G."/>
            <person name="Shearman C."/>
            <person name="Canchaya C."/>
            <person name="Ventura M."/>
            <person name="Goesmann A."/>
            <person name="Gasson M.J."/>
            <person name="Kuipers O.P."/>
            <person name="van Sinderen D."/>
            <person name="Kok J."/>
        </authorList>
    </citation>
    <scope>NUCLEOTIDE SEQUENCE [LARGE SCALE GENOMIC DNA]</scope>
    <source>
        <strain>MG1363</strain>
    </source>
</reference>
<proteinExistence type="inferred from homology"/>
<gene>
    <name evidence="1" type="primary">dltC</name>
    <name type="ordered locus">llmg_1221</name>
</gene>
<sequence length="79" mass="9126">MKEQIFDIIETISGTDEFREDLDMDLFEEGILDSMRAIMLIVELEGAFDISLPPSEMDREDWNTANKIAARVQEKTDEN</sequence>
<comment type="function">
    <text evidence="1">Carrier protein involved in the D-alanylation of lipoteichoic acid (LTA). The loading of thioester-linked D-alanine onto DltC is catalyzed by D-alanine--D-alanyl carrier protein ligase DltA. The DltC-carried D-alanyl group is further transferred to cell membrane phosphatidylglycerol (PG) by forming an ester bond, probably catalyzed by DltD. D-alanylation of LTA plays an important role in modulating the properties of the cell wall in Gram-positive bacteria, influencing the net charge of the cell wall.</text>
</comment>
<comment type="pathway">
    <text evidence="1">Cell wall biogenesis; lipoteichoic acid biosynthesis.</text>
</comment>
<comment type="subcellular location">
    <subcellularLocation>
        <location evidence="1">Cytoplasm</location>
    </subcellularLocation>
</comment>
<comment type="PTM">
    <text evidence="1">4'-phosphopantetheine is transferred from CoA to a specific serine of apo-DCP.</text>
</comment>
<comment type="similarity">
    <text evidence="1">Belongs to the DltC family.</text>
</comment>